<name>PYRG_BLOFL</name>
<gene>
    <name evidence="1" type="primary">pyrG</name>
    <name type="ordered locus">Bfl156</name>
</gene>
<feature type="chain" id="PRO_0000266070" description="CTP synthase">
    <location>
        <begin position="1"/>
        <end position="550"/>
    </location>
</feature>
<feature type="domain" description="Glutamine amidotransferase type-1" evidence="1">
    <location>
        <begin position="291"/>
        <end position="546"/>
    </location>
</feature>
<feature type="region of interest" description="Amidoligase domain" evidence="1">
    <location>
        <begin position="1"/>
        <end position="266"/>
    </location>
</feature>
<feature type="active site" description="Nucleophile; for glutamine hydrolysis" evidence="1">
    <location>
        <position position="380"/>
    </location>
</feature>
<feature type="active site" evidence="1">
    <location>
        <position position="519"/>
    </location>
</feature>
<feature type="active site" evidence="1">
    <location>
        <position position="521"/>
    </location>
</feature>
<feature type="binding site" evidence="1">
    <location>
        <position position="14"/>
    </location>
    <ligand>
        <name>CTP</name>
        <dbReference type="ChEBI" id="CHEBI:37563"/>
        <note>allosteric inhibitor</note>
    </ligand>
</feature>
<feature type="binding site" evidence="1">
    <location>
        <position position="14"/>
    </location>
    <ligand>
        <name>UTP</name>
        <dbReference type="ChEBI" id="CHEBI:46398"/>
    </ligand>
</feature>
<feature type="binding site" evidence="1">
    <location>
        <begin position="15"/>
        <end position="20"/>
    </location>
    <ligand>
        <name>ATP</name>
        <dbReference type="ChEBI" id="CHEBI:30616"/>
    </ligand>
</feature>
<feature type="binding site" evidence="1">
    <location>
        <position position="72"/>
    </location>
    <ligand>
        <name>ATP</name>
        <dbReference type="ChEBI" id="CHEBI:30616"/>
    </ligand>
</feature>
<feature type="binding site" evidence="1">
    <location>
        <position position="72"/>
    </location>
    <ligand>
        <name>Mg(2+)</name>
        <dbReference type="ChEBI" id="CHEBI:18420"/>
    </ligand>
</feature>
<feature type="binding site" evidence="1">
    <location>
        <position position="140"/>
    </location>
    <ligand>
        <name>Mg(2+)</name>
        <dbReference type="ChEBI" id="CHEBI:18420"/>
    </ligand>
</feature>
<feature type="binding site" evidence="1">
    <location>
        <begin position="147"/>
        <end position="149"/>
    </location>
    <ligand>
        <name>CTP</name>
        <dbReference type="ChEBI" id="CHEBI:37563"/>
        <note>allosteric inhibitor</note>
    </ligand>
</feature>
<feature type="binding site" evidence="1">
    <location>
        <begin position="187"/>
        <end position="192"/>
    </location>
    <ligand>
        <name>CTP</name>
        <dbReference type="ChEBI" id="CHEBI:37563"/>
        <note>allosteric inhibitor</note>
    </ligand>
</feature>
<feature type="binding site" evidence="1">
    <location>
        <begin position="187"/>
        <end position="192"/>
    </location>
    <ligand>
        <name>UTP</name>
        <dbReference type="ChEBI" id="CHEBI:46398"/>
    </ligand>
</feature>
<feature type="binding site" evidence="1">
    <location>
        <position position="223"/>
    </location>
    <ligand>
        <name>CTP</name>
        <dbReference type="ChEBI" id="CHEBI:37563"/>
        <note>allosteric inhibitor</note>
    </ligand>
</feature>
<feature type="binding site" evidence="1">
    <location>
        <position position="223"/>
    </location>
    <ligand>
        <name>UTP</name>
        <dbReference type="ChEBI" id="CHEBI:46398"/>
    </ligand>
</feature>
<feature type="binding site" evidence="1">
    <location>
        <position position="353"/>
    </location>
    <ligand>
        <name>L-glutamine</name>
        <dbReference type="ChEBI" id="CHEBI:58359"/>
    </ligand>
</feature>
<feature type="binding site" evidence="1">
    <location>
        <begin position="381"/>
        <end position="384"/>
    </location>
    <ligand>
        <name>L-glutamine</name>
        <dbReference type="ChEBI" id="CHEBI:58359"/>
    </ligand>
</feature>
<feature type="binding site" evidence="1">
    <location>
        <position position="404"/>
    </location>
    <ligand>
        <name>L-glutamine</name>
        <dbReference type="ChEBI" id="CHEBI:58359"/>
    </ligand>
</feature>
<feature type="binding site" evidence="1">
    <location>
        <position position="474"/>
    </location>
    <ligand>
        <name>L-glutamine</name>
        <dbReference type="ChEBI" id="CHEBI:58359"/>
    </ligand>
</feature>
<keyword id="KW-0067">ATP-binding</keyword>
<keyword id="KW-0315">Glutamine amidotransferase</keyword>
<keyword id="KW-0436">Ligase</keyword>
<keyword id="KW-0460">Magnesium</keyword>
<keyword id="KW-0479">Metal-binding</keyword>
<keyword id="KW-0547">Nucleotide-binding</keyword>
<keyword id="KW-0665">Pyrimidine biosynthesis</keyword>
<keyword id="KW-1185">Reference proteome</keyword>
<dbReference type="EC" id="6.3.4.2" evidence="1"/>
<dbReference type="EMBL" id="BX248583">
    <property type="protein sequence ID" value="CAD83677.1"/>
    <property type="molecule type" value="Genomic_DNA"/>
</dbReference>
<dbReference type="SMR" id="Q7VQH4"/>
<dbReference type="STRING" id="203907.Bfl156"/>
<dbReference type="KEGG" id="bfl:Bfl156"/>
<dbReference type="eggNOG" id="COG0504">
    <property type="taxonomic scope" value="Bacteria"/>
</dbReference>
<dbReference type="HOGENOM" id="CLU_011675_5_0_6"/>
<dbReference type="OrthoDB" id="9801107at2"/>
<dbReference type="UniPathway" id="UPA00159">
    <property type="reaction ID" value="UER00277"/>
</dbReference>
<dbReference type="Proteomes" id="UP000002192">
    <property type="component" value="Chromosome"/>
</dbReference>
<dbReference type="GO" id="GO:0005829">
    <property type="term" value="C:cytosol"/>
    <property type="evidence" value="ECO:0007669"/>
    <property type="project" value="TreeGrafter"/>
</dbReference>
<dbReference type="GO" id="GO:0005524">
    <property type="term" value="F:ATP binding"/>
    <property type="evidence" value="ECO:0007669"/>
    <property type="project" value="UniProtKB-KW"/>
</dbReference>
<dbReference type="GO" id="GO:0003883">
    <property type="term" value="F:CTP synthase activity"/>
    <property type="evidence" value="ECO:0007669"/>
    <property type="project" value="UniProtKB-UniRule"/>
</dbReference>
<dbReference type="GO" id="GO:0004359">
    <property type="term" value="F:glutaminase activity"/>
    <property type="evidence" value="ECO:0007669"/>
    <property type="project" value="RHEA"/>
</dbReference>
<dbReference type="GO" id="GO:0042802">
    <property type="term" value="F:identical protein binding"/>
    <property type="evidence" value="ECO:0007669"/>
    <property type="project" value="TreeGrafter"/>
</dbReference>
<dbReference type="GO" id="GO:0046872">
    <property type="term" value="F:metal ion binding"/>
    <property type="evidence" value="ECO:0007669"/>
    <property type="project" value="UniProtKB-KW"/>
</dbReference>
<dbReference type="GO" id="GO:0044210">
    <property type="term" value="P:'de novo' CTP biosynthetic process"/>
    <property type="evidence" value="ECO:0007669"/>
    <property type="project" value="UniProtKB-UniRule"/>
</dbReference>
<dbReference type="GO" id="GO:0019856">
    <property type="term" value="P:pyrimidine nucleobase biosynthetic process"/>
    <property type="evidence" value="ECO:0007669"/>
    <property type="project" value="TreeGrafter"/>
</dbReference>
<dbReference type="CDD" id="cd03113">
    <property type="entry name" value="CTPS_N"/>
    <property type="match status" value="1"/>
</dbReference>
<dbReference type="CDD" id="cd01746">
    <property type="entry name" value="GATase1_CTP_Synthase"/>
    <property type="match status" value="1"/>
</dbReference>
<dbReference type="FunFam" id="3.40.50.300:FF:000009">
    <property type="entry name" value="CTP synthase"/>
    <property type="match status" value="1"/>
</dbReference>
<dbReference type="FunFam" id="3.40.50.880:FF:000002">
    <property type="entry name" value="CTP synthase"/>
    <property type="match status" value="1"/>
</dbReference>
<dbReference type="Gene3D" id="3.40.50.880">
    <property type="match status" value="1"/>
</dbReference>
<dbReference type="Gene3D" id="3.40.50.300">
    <property type="entry name" value="P-loop containing nucleotide triphosphate hydrolases"/>
    <property type="match status" value="1"/>
</dbReference>
<dbReference type="HAMAP" id="MF_01227">
    <property type="entry name" value="PyrG"/>
    <property type="match status" value="1"/>
</dbReference>
<dbReference type="InterPro" id="IPR029062">
    <property type="entry name" value="Class_I_gatase-like"/>
</dbReference>
<dbReference type="InterPro" id="IPR004468">
    <property type="entry name" value="CTP_synthase"/>
</dbReference>
<dbReference type="InterPro" id="IPR017456">
    <property type="entry name" value="CTP_synthase_N"/>
</dbReference>
<dbReference type="InterPro" id="IPR017926">
    <property type="entry name" value="GATASE"/>
</dbReference>
<dbReference type="InterPro" id="IPR033828">
    <property type="entry name" value="GATase1_CTP_Synthase"/>
</dbReference>
<dbReference type="InterPro" id="IPR027417">
    <property type="entry name" value="P-loop_NTPase"/>
</dbReference>
<dbReference type="NCBIfam" id="NF003792">
    <property type="entry name" value="PRK05380.1"/>
    <property type="match status" value="1"/>
</dbReference>
<dbReference type="NCBIfam" id="TIGR00337">
    <property type="entry name" value="PyrG"/>
    <property type="match status" value="1"/>
</dbReference>
<dbReference type="PANTHER" id="PTHR11550">
    <property type="entry name" value="CTP SYNTHASE"/>
    <property type="match status" value="1"/>
</dbReference>
<dbReference type="PANTHER" id="PTHR11550:SF0">
    <property type="entry name" value="CTP SYNTHASE-RELATED"/>
    <property type="match status" value="1"/>
</dbReference>
<dbReference type="Pfam" id="PF06418">
    <property type="entry name" value="CTP_synth_N"/>
    <property type="match status" value="1"/>
</dbReference>
<dbReference type="Pfam" id="PF00117">
    <property type="entry name" value="GATase"/>
    <property type="match status" value="1"/>
</dbReference>
<dbReference type="SUPFAM" id="SSF52317">
    <property type="entry name" value="Class I glutamine amidotransferase-like"/>
    <property type="match status" value="1"/>
</dbReference>
<dbReference type="SUPFAM" id="SSF52540">
    <property type="entry name" value="P-loop containing nucleoside triphosphate hydrolases"/>
    <property type="match status" value="1"/>
</dbReference>
<dbReference type="PROSITE" id="PS51273">
    <property type="entry name" value="GATASE_TYPE_1"/>
    <property type="match status" value="1"/>
</dbReference>
<organism>
    <name type="scientific">Blochmanniella floridana</name>
    <dbReference type="NCBI Taxonomy" id="203907"/>
    <lineage>
        <taxon>Bacteria</taxon>
        <taxon>Pseudomonadati</taxon>
        <taxon>Pseudomonadota</taxon>
        <taxon>Gammaproteobacteria</taxon>
        <taxon>Enterobacterales</taxon>
        <taxon>Enterobacteriaceae</taxon>
        <taxon>ant endosymbionts</taxon>
        <taxon>Candidatus Blochmanniella</taxon>
    </lineage>
</organism>
<comment type="function">
    <text evidence="1">Catalyzes the ATP-dependent amination of UTP to CTP with either L-glutamine or ammonia as the source of nitrogen. Regulates intracellular CTP levels through interactions with the four ribonucleotide triphosphates.</text>
</comment>
<comment type="catalytic activity">
    <reaction evidence="1">
        <text>UTP + L-glutamine + ATP + H2O = CTP + L-glutamate + ADP + phosphate + 2 H(+)</text>
        <dbReference type="Rhea" id="RHEA:26426"/>
        <dbReference type="ChEBI" id="CHEBI:15377"/>
        <dbReference type="ChEBI" id="CHEBI:15378"/>
        <dbReference type="ChEBI" id="CHEBI:29985"/>
        <dbReference type="ChEBI" id="CHEBI:30616"/>
        <dbReference type="ChEBI" id="CHEBI:37563"/>
        <dbReference type="ChEBI" id="CHEBI:43474"/>
        <dbReference type="ChEBI" id="CHEBI:46398"/>
        <dbReference type="ChEBI" id="CHEBI:58359"/>
        <dbReference type="ChEBI" id="CHEBI:456216"/>
        <dbReference type="EC" id="6.3.4.2"/>
    </reaction>
</comment>
<comment type="catalytic activity">
    <reaction evidence="1">
        <text>L-glutamine + H2O = L-glutamate + NH4(+)</text>
        <dbReference type="Rhea" id="RHEA:15889"/>
        <dbReference type="ChEBI" id="CHEBI:15377"/>
        <dbReference type="ChEBI" id="CHEBI:28938"/>
        <dbReference type="ChEBI" id="CHEBI:29985"/>
        <dbReference type="ChEBI" id="CHEBI:58359"/>
    </reaction>
</comment>
<comment type="catalytic activity">
    <reaction evidence="1">
        <text>UTP + NH4(+) + ATP = CTP + ADP + phosphate + 2 H(+)</text>
        <dbReference type="Rhea" id="RHEA:16597"/>
        <dbReference type="ChEBI" id="CHEBI:15378"/>
        <dbReference type="ChEBI" id="CHEBI:28938"/>
        <dbReference type="ChEBI" id="CHEBI:30616"/>
        <dbReference type="ChEBI" id="CHEBI:37563"/>
        <dbReference type="ChEBI" id="CHEBI:43474"/>
        <dbReference type="ChEBI" id="CHEBI:46398"/>
        <dbReference type="ChEBI" id="CHEBI:456216"/>
    </reaction>
</comment>
<comment type="activity regulation">
    <text evidence="1">Allosterically activated by GTP, when glutamine is the substrate; GTP has no effect on the reaction when ammonia is the substrate. The allosteric effector GTP functions by stabilizing the protein conformation that binds the tetrahedral intermediate(s) formed during glutamine hydrolysis. Inhibited by the product CTP, via allosteric rather than competitive inhibition.</text>
</comment>
<comment type="pathway">
    <text evidence="1">Pyrimidine metabolism; CTP biosynthesis via de novo pathway; CTP from UDP: step 2/2.</text>
</comment>
<comment type="subunit">
    <text evidence="1">Homotetramer.</text>
</comment>
<comment type="miscellaneous">
    <text evidence="1">CTPSs have evolved a hybrid strategy for distinguishing between UTP and CTP. The overlapping regions of the product feedback inhibitory and substrate sites recognize a common feature in both compounds, the triphosphate moiety. To differentiate isosteric substrate and product pyrimidine rings, an additional pocket far from the expected kinase/ligase catalytic site, specifically recognizes the cytosine and ribose portions of the product inhibitor.</text>
</comment>
<comment type="similarity">
    <text evidence="1">Belongs to the CTP synthase family.</text>
</comment>
<sequence length="550" mass="62049">MNVNYIFVTGGVVSSLGKGIVTASLASVLEARGLDVTIIKLDPYINVDPGTMSPIQHGEVFITEDGAETDLDLGHYERFIKTKMTRYNNCTTGRIYSNVLKRERRGDYLGSTVQIIPHVTSFIKQWLITHSKSYDVLLVEVGGTVGDIESLPFLEAIRQMAIDVNRYHTLYIHLTLVPFISMTGELKTKPTQHSVKELLSIGIQPDILICRSDHLIGDSERKKISLFCNVSKKAVISLQNVNSIYKIPLMLQDQGLDEYICKYFNLNCPKADLSDWKQVVYYQNNPKGTVTIGIVGKYIRLTDAYKSVIEALQHAGLKNRFFVKICFIDAQDLETLSVKKMLKGLDGILVPGGFGYRGVEGKILSAQYARENNIPYFGICLGMQVALIEFARHVVGMEDANSTEFVNNCKYPVISEITGYQCTNNNNDIIQYHDNVDFSRSTMRLGSQVCHLIEGSLTQQMYGKKIIYERFRHRYEINISLFKEIEYAGLSGVGYSKNNNFIEIIECKNHPWFIGSQFHPEFNSTPRDGHPLFVGFINAAIQYQCKIIGS</sequence>
<accession>Q7VQH4</accession>
<protein>
    <recommendedName>
        <fullName evidence="1">CTP synthase</fullName>
        <ecNumber evidence="1">6.3.4.2</ecNumber>
    </recommendedName>
    <alternativeName>
        <fullName evidence="1">Cytidine 5'-triphosphate synthase</fullName>
    </alternativeName>
    <alternativeName>
        <fullName evidence="1">Cytidine triphosphate synthetase</fullName>
        <shortName evidence="1">CTP synthetase</shortName>
        <shortName evidence="1">CTPS</shortName>
    </alternativeName>
    <alternativeName>
        <fullName evidence="1">UTP--ammonia ligase</fullName>
    </alternativeName>
</protein>
<proteinExistence type="inferred from homology"/>
<evidence type="ECO:0000255" key="1">
    <source>
        <dbReference type="HAMAP-Rule" id="MF_01227"/>
    </source>
</evidence>
<reference key="1">
    <citation type="journal article" date="2003" name="Proc. Natl. Acad. Sci. U.S.A.">
        <title>The genome sequence of Blochmannia floridanus: comparative analysis of reduced genomes.</title>
        <authorList>
            <person name="Gil R."/>
            <person name="Silva F.J."/>
            <person name="Zientz E."/>
            <person name="Delmotte F."/>
            <person name="Gonzalez-Candelas F."/>
            <person name="Latorre A."/>
            <person name="Rausell C."/>
            <person name="Kamerbeek J."/>
            <person name="Gadau J."/>
            <person name="Hoelldobler B."/>
            <person name="van Ham R.C.H.J."/>
            <person name="Gross R."/>
            <person name="Moya A."/>
        </authorList>
    </citation>
    <scope>NUCLEOTIDE SEQUENCE [LARGE SCALE GENOMIC DNA]</scope>
</reference>